<reference key="1">
    <citation type="journal article" date="1992" name="J. Gen. Microbiol.">
        <title>A monofunctional prephenate dehydrogenase created by cleavage of the 5' 109 bp of the tyrA gene from Erwinia herbicola.</title>
        <authorList>
            <person name="Xia T."/>
            <person name="Zhao G."/>
            <person name="Fischer R.S."/>
            <person name="Jensen R.A."/>
        </authorList>
    </citation>
    <scope>NUCLEOTIDE SEQUENCE [GENOMIC DNA]</scope>
</reference>
<reference key="2">
    <citation type="journal article" date="1992" name="Appl. Environ. Microbiol.">
        <title>Loss of allosteric control but retention of the bifunctional catalytic competence of a fusion protein formed by excision of 260 base pairs from the 3' terminus of pheA from Erwinia herbicola.</title>
        <authorList>
            <person name="Xia T."/>
            <person name="Zhao G."/>
            <person name="Jensen R.A."/>
        </authorList>
    </citation>
    <scope>NUCLEOTIDE SEQUENCE [GENOMIC DNA] OF 1-301</scope>
</reference>
<keyword id="KW-0028">Amino-acid biosynthesis</keyword>
<keyword id="KW-0057">Aromatic amino acid biosynthesis</keyword>
<keyword id="KW-0963">Cytoplasm</keyword>
<keyword id="KW-0413">Isomerase</keyword>
<keyword id="KW-0456">Lyase</keyword>
<keyword id="KW-0511">Multifunctional enzyme</keyword>
<keyword id="KW-0584">Phenylalanine biosynthesis</keyword>
<feature type="chain" id="PRO_0000119187" description="Bifunctional chorismate mutase/prephenate dehydratase">
    <location>
        <begin position="1"/>
        <end position="387"/>
    </location>
</feature>
<feature type="domain" description="Chorismate mutase" evidence="3">
    <location>
        <begin position="1"/>
        <end position="92"/>
    </location>
</feature>
<feature type="domain" description="Prephenate dehydratase" evidence="4">
    <location>
        <begin position="105"/>
        <end position="285"/>
    </location>
</feature>
<feature type="domain" description="ACT" evidence="5">
    <location>
        <begin position="299"/>
        <end position="376"/>
    </location>
</feature>
<feature type="binding site" evidence="1">
    <location>
        <position position="11"/>
    </location>
    <ligand>
        <name>substrate</name>
    </ligand>
</feature>
<feature type="binding site" evidence="1">
    <location>
        <position position="28"/>
    </location>
    <ligand>
        <name>substrate</name>
    </ligand>
</feature>
<feature type="binding site" evidence="1">
    <location>
        <position position="39"/>
    </location>
    <ligand>
        <name>substrate</name>
    </ligand>
</feature>
<feature type="binding site" evidence="1">
    <location>
        <position position="48"/>
    </location>
    <ligand>
        <name>substrate</name>
    </ligand>
</feature>
<feature type="binding site" evidence="1">
    <location>
        <position position="52"/>
    </location>
    <ligand>
        <name>substrate</name>
    </ligand>
</feature>
<feature type="binding site" evidence="1">
    <location>
        <position position="84"/>
    </location>
    <ligand>
        <name>substrate</name>
    </ligand>
</feature>
<feature type="binding site" evidence="1">
    <location>
        <position position="88"/>
    </location>
    <ligand>
        <name>substrate</name>
    </ligand>
</feature>
<feature type="site" description="Essential for prephenate dehydratase activity" evidence="2">
    <location>
        <position position="278"/>
    </location>
</feature>
<feature type="sequence conflict" description="In Ref. 2; AAA24853." evidence="6" ref="2">
    <original>I</original>
    <variation>K</variation>
    <location>
        <position position="301"/>
    </location>
</feature>
<dbReference type="EC" id="5.4.99.5" evidence="1"/>
<dbReference type="EC" id="4.2.1.51" evidence="1"/>
<dbReference type="EMBL" id="X60420">
    <property type="protein sequence ID" value="CAA42949.1"/>
    <property type="molecule type" value="Genomic_DNA"/>
</dbReference>
<dbReference type="EMBL" id="M74134">
    <property type="protein sequence ID" value="AAA24853.1"/>
    <property type="molecule type" value="Genomic_DNA"/>
</dbReference>
<dbReference type="PIR" id="S26053">
    <property type="entry name" value="S26053"/>
</dbReference>
<dbReference type="SMR" id="Q02286"/>
<dbReference type="STRING" id="549.BEE12_02580"/>
<dbReference type="eggNOG" id="COG0077">
    <property type="taxonomic scope" value="Bacteria"/>
</dbReference>
<dbReference type="eggNOG" id="COG1605">
    <property type="taxonomic scope" value="Bacteria"/>
</dbReference>
<dbReference type="UniPathway" id="UPA00120">
    <property type="reaction ID" value="UER00203"/>
</dbReference>
<dbReference type="UniPathway" id="UPA00121">
    <property type="reaction ID" value="UER00345"/>
</dbReference>
<dbReference type="GO" id="GO:0005737">
    <property type="term" value="C:cytoplasm"/>
    <property type="evidence" value="ECO:0007669"/>
    <property type="project" value="UniProtKB-SubCell"/>
</dbReference>
<dbReference type="GO" id="GO:0004106">
    <property type="term" value="F:chorismate mutase activity"/>
    <property type="evidence" value="ECO:0007669"/>
    <property type="project" value="UniProtKB-EC"/>
</dbReference>
<dbReference type="GO" id="GO:0004664">
    <property type="term" value="F:prephenate dehydratase activity"/>
    <property type="evidence" value="ECO:0007669"/>
    <property type="project" value="UniProtKB-EC"/>
</dbReference>
<dbReference type="GO" id="GO:0046417">
    <property type="term" value="P:chorismate metabolic process"/>
    <property type="evidence" value="ECO:0007669"/>
    <property type="project" value="InterPro"/>
</dbReference>
<dbReference type="GO" id="GO:0009094">
    <property type="term" value="P:L-phenylalanine biosynthetic process"/>
    <property type="evidence" value="ECO:0007669"/>
    <property type="project" value="UniProtKB-UniPathway"/>
</dbReference>
<dbReference type="CDD" id="cd04905">
    <property type="entry name" value="ACT_CM-PDT"/>
    <property type="match status" value="1"/>
</dbReference>
<dbReference type="CDD" id="cd13631">
    <property type="entry name" value="PBP2_Ct-PDT_like"/>
    <property type="match status" value="1"/>
</dbReference>
<dbReference type="FunFam" id="1.20.59.10:FF:000002">
    <property type="entry name" value="Chorismate mutase/prephenate dehydratase"/>
    <property type="match status" value="1"/>
</dbReference>
<dbReference type="FunFam" id="3.30.70.260:FF:000022">
    <property type="entry name" value="Chorismate mutase/prephenate dehydratase"/>
    <property type="match status" value="1"/>
</dbReference>
<dbReference type="FunFam" id="3.40.190.10:FF:000034">
    <property type="entry name" value="Chorismate mutase/prephenate dehydratase"/>
    <property type="match status" value="1"/>
</dbReference>
<dbReference type="FunFam" id="3.40.190.10:FF:000044">
    <property type="entry name" value="Chorismate mutase/prephenate dehydratase"/>
    <property type="match status" value="1"/>
</dbReference>
<dbReference type="Gene3D" id="3.30.70.260">
    <property type="match status" value="1"/>
</dbReference>
<dbReference type="Gene3D" id="1.20.59.10">
    <property type="entry name" value="Chorismate mutase"/>
    <property type="match status" value="1"/>
</dbReference>
<dbReference type="Gene3D" id="3.40.190.10">
    <property type="entry name" value="Periplasmic binding protein-like II"/>
    <property type="match status" value="2"/>
</dbReference>
<dbReference type="InterPro" id="IPR045865">
    <property type="entry name" value="ACT-like_dom_sf"/>
</dbReference>
<dbReference type="InterPro" id="IPR002912">
    <property type="entry name" value="ACT_dom"/>
</dbReference>
<dbReference type="InterPro" id="IPR008242">
    <property type="entry name" value="Chor_mutase/pphenate_deHydtase"/>
</dbReference>
<dbReference type="InterPro" id="IPR036263">
    <property type="entry name" value="Chorismate_II_sf"/>
</dbReference>
<dbReference type="InterPro" id="IPR036979">
    <property type="entry name" value="CM_dom_sf"/>
</dbReference>
<dbReference type="InterPro" id="IPR002701">
    <property type="entry name" value="CM_II_prokaryot"/>
</dbReference>
<dbReference type="InterPro" id="IPR010952">
    <property type="entry name" value="CM_P_1"/>
</dbReference>
<dbReference type="InterPro" id="IPR001086">
    <property type="entry name" value="Preph_deHydtase"/>
</dbReference>
<dbReference type="InterPro" id="IPR018528">
    <property type="entry name" value="Preph_deHydtase_CS"/>
</dbReference>
<dbReference type="NCBIfam" id="TIGR01797">
    <property type="entry name" value="CM_P_1"/>
    <property type="match status" value="1"/>
</dbReference>
<dbReference type="NCBIfam" id="NF007910">
    <property type="entry name" value="PRK10622.1"/>
    <property type="match status" value="1"/>
</dbReference>
<dbReference type="NCBIfam" id="NF008865">
    <property type="entry name" value="PRK11898.1"/>
    <property type="match status" value="1"/>
</dbReference>
<dbReference type="PANTHER" id="PTHR21022">
    <property type="entry name" value="PREPHENATE DEHYDRATASE P PROTEIN"/>
    <property type="match status" value="1"/>
</dbReference>
<dbReference type="PANTHER" id="PTHR21022:SF19">
    <property type="entry name" value="PREPHENATE DEHYDRATASE-RELATED"/>
    <property type="match status" value="1"/>
</dbReference>
<dbReference type="Pfam" id="PF01817">
    <property type="entry name" value="CM_2"/>
    <property type="match status" value="1"/>
</dbReference>
<dbReference type="Pfam" id="PF00800">
    <property type="entry name" value="PDT"/>
    <property type="match status" value="1"/>
</dbReference>
<dbReference type="PIRSF" id="PIRSF001500">
    <property type="entry name" value="Chor_mut_pdt_Ppr"/>
    <property type="match status" value="1"/>
</dbReference>
<dbReference type="SMART" id="SM00830">
    <property type="entry name" value="CM_2"/>
    <property type="match status" value="1"/>
</dbReference>
<dbReference type="SUPFAM" id="SSF55021">
    <property type="entry name" value="ACT-like"/>
    <property type="match status" value="1"/>
</dbReference>
<dbReference type="SUPFAM" id="SSF48600">
    <property type="entry name" value="Chorismate mutase II"/>
    <property type="match status" value="1"/>
</dbReference>
<dbReference type="SUPFAM" id="SSF53850">
    <property type="entry name" value="Periplasmic binding protein-like II"/>
    <property type="match status" value="1"/>
</dbReference>
<dbReference type="PROSITE" id="PS51671">
    <property type="entry name" value="ACT"/>
    <property type="match status" value="1"/>
</dbReference>
<dbReference type="PROSITE" id="PS51168">
    <property type="entry name" value="CHORISMATE_MUT_2"/>
    <property type="match status" value="1"/>
</dbReference>
<dbReference type="PROSITE" id="PS00857">
    <property type="entry name" value="PREPHENATE_DEHYDR_1"/>
    <property type="match status" value="1"/>
</dbReference>
<dbReference type="PROSITE" id="PS00858">
    <property type="entry name" value="PREPHENATE_DEHYDR_2"/>
    <property type="match status" value="1"/>
</dbReference>
<dbReference type="PROSITE" id="PS51171">
    <property type="entry name" value="PREPHENATE_DEHYDR_3"/>
    <property type="match status" value="1"/>
</dbReference>
<proteinExistence type="inferred from homology"/>
<evidence type="ECO:0000250" key="1">
    <source>
        <dbReference type="UniProtKB" id="P0A9J8"/>
    </source>
</evidence>
<evidence type="ECO:0000255" key="2"/>
<evidence type="ECO:0000255" key="3">
    <source>
        <dbReference type="PROSITE-ProRule" id="PRU00515"/>
    </source>
</evidence>
<evidence type="ECO:0000255" key="4">
    <source>
        <dbReference type="PROSITE-ProRule" id="PRU00517"/>
    </source>
</evidence>
<evidence type="ECO:0000255" key="5">
    <source>
        <dbReference type="PROSITE-ProRule" id="PRU01007"/>
    </source>
</evidence>
<evidence type="ECO:0000305" key="6"/>
<organism>
    <name type="scientific">Enterobacter agglomerans</name>
    <name type="common">Erwinia herbicola</name>
    <name type="synonym">Pantoea agglomerans</name>
    <dbReference type="NCBI Taxonomy" id="549"/>
    <lineage>
        <taxon>Bacteria</taxon>
        <taxon>Pseudomonadati</taxon>
        <taxon>Pseudomonadota</taxon>
        <taxon>Gammaproteobacteria</taxon>
        <taxon>Enterobacterales</taxon>
        <taxon>Erwiniaceae</taxon>
        <taxon>Pantoea</taxon>
        <taxon>Pantoea agglomerans group</taxon>
    </lineage>
</organism>
<accession>Q02286</accession>
<protein>
    <recommendedName>
        <fullName evidence="1">Bifunctional chorismate mutase/prephenate dehydratase</fullName>
    </recommendedName>
    <alternativeName>
        <fullName evidence="1">Chorismate mutase-prephenate dehydratase</fullName>
    </alternativeName>
    <alternativeName>
        <fullName evidence="1">P-protein</fullName>
    </alternativeName>
    <domain>
        <recommendedName>
            <fullName evidence="1">Chorismate mutase</fullName>
            <shortName evidence="1">CM</shortName>
            <ecNumber evidence="1">5.4.99.5</ecNumber>
        </recommendedName>
    </domain>
    <domain>
        <recommendedName>
            <fullName evidence="1">Prephenate dehydratase</fullName>
            <shortName evidence="1">PDT</shortName>
            <ecNumber evidence="1">4.2.1.51</ecNumber>
        </recommendedName>
    </domain>
</protein>
<sequence length="387" mass="43183">MNPDNPLLALRDKISAVDKKLLTLLAERRLLAVEVAQAKLATHRPIRDVERERALLENLIVLGKAHNLDAHYITRLFQLVIEDSVLTQQALLQKNLNHPHAHAARIAFLGPKGSYSHLAARNYASRHFDSMVECGCLKFHDIIKQVENGVADYAVMPIENTSSGSINDVYDLLQQTSLSIVGELTLPIDHCVLVNGPTDLQQIETVYSHPQPFQQCSQFINRFPHWKIEYTESTAAAMEKVAALNSPKVAALGSEAGGELYQLQVLERNLANQQQNHTRFIVLARKAIEVSDQVPAKTTLIMATGQQAGALVDALLVLRQHNLIMSKLESRPINGNPWEEMFYIDVQGNLQSERMQQALQELQTMTRSLKVLGCYPSENVVPAEPGR</sequence>
<comment type="function">
    <text evidence="1">Catalyzes the Claisen rearrangement of chorismate to prephenate and the decarboxylation/dehydration of prephenate to phenylpyruvate.</text>
</comment>
<comment type="catalytic activity">
    <reaction evidence="1">
        <text>chorismate = prephenate</text>
        <dbReference type="Rhea" id="RHEA:13897"/>
        <dbReference type="ChEBI" id="CHEBI:29748"/>
        <dbReference type="ChEBI" id="CHEBI:29934"/>
        <dbReference type="EC" id="5.4.99.5"/>
    </reaction>
</comment>
<comment type="catalytic activity">
    <reaction evidence="1">
        <text>prephenate + H(+) = 3-phenylpyruvate + CO2 + H2O</text>
        <dbReference type="Rhea" id="RHEA:21648"/>
        <dbReference type="ChEBI" id="CHEBI:15377"/>
        <dbReference type="ChEBI" id="CHEBI:15378"/>
        <dbReference type="ChEBI" id="CHEBI:16526"/>
        <dbReference type="ChEBI" id="CHEBI:18005"/>
        <dbReference type="ChEBI" id="CHEBI:29934"/>
        <dbReference type="EC" id="4.2.1.51"/>
    </reaction>
</comment>
<comment type="pathway">
    <text evidence="1">Amino-acid biosynthesis; L-phenylalanine biosynthesis; phenylpyruvate from prephenate: step 1/1.</text>
</comment>
<comment type="pathway">
    <text evidence="1">Metabolic intermediate biosynthesis; prephenate biosynthesis; prephenate from chorismate: step 1/1.</text>
</comment>
<comment type="subcellular location">
    <subcellularLocation>
        <location evidence="1">Cytoplasm</location>
    </subcellularLocation>
</comment>
<name>CMPDT_ENTAG</name>
<gene>
    <name type="primary">pheA</name>
</gene>